<comment type="function">
    <text evidence="1">The beta subunit is responsible for the synthesis of L-tryptophan from indole and L-serine.</text>
</comment>
<comment type="catalytic activity">
    <reaction evidence="1">
        <text>(1S,2R)-1-C-(indol-3-yl)glycerol 3-phosphate + L-serine = D-glyceraldehyde 3-phosphate + L-tryptophan + H2O</text>
        <dbReference type="Rhea" id="RHEA:10532"/>
        <dbReference type="ChEBI" id="CHEBI:15377"/>
        <dbReference type="ChEBI" id="CHEBI:33384"/>
        <dbReference type="ChEBI" id="CHEBI:57912"/>
        <dbReference type="ChEBI" id="CHEBI:58866"/>
        <dbReference type="ChEBI" id="CHEBI:59776"/>
        <dbReference type="EC" id="4.2.1.20"/>
    </reaction>
</comment>
<comment type="cofactor">
    <cofactor evidence="1">
        <name>pyridoxal 5'-phosphate</name>
        <dbReference type="ChEBI" id="CHEBI:597326"/>
    </cofactor>
</comment>
<comment type="pathway">
    <text evidence="1">Amino-acid biosynthesis; L-tryptophan biosynthesis; L-tryptophan from chorismate: step 5/5.</text>
</comment>
<comment type="subunit">
    <text evidence="1">Tetramer of two alpha and two beta chains.</text>
</comment>
<comment type="similarity">
    <text evidence="1">Belongs to the TrpB family.</text>
</comment>
<accession>C6DGZ5</accession>
<evidence type="ECO:0000255" key="1">
    <source>
        <dbReference type="HAMAP-Rule" id="MF_00133"/>
    </source>
</evidence>
<feature type="chain" id="PRO_1000203194" description="Tryptophan synthase beta chain">
    <location>
        <begin position="1"/>
        <end position="396"/>
    </location>
</feature>
<feature type="modified residue" description="N6-(pyridoxal phosphate)lysine" evidence="1">
    <location>
        <position position="86"/>
    </location>
</feature>
<name>TRPB_PECCP</name>
<gene>
    <name evidence="1" type="primary">trpB</name>
    <name type="ordered locus">PC1_2003</name>
</gene>
<dbReference type="EC" id="4.2.1.20" evidence="1"/>
<dbReference type="EMBL" id="CP001657">
    <property type="protein sequence ID" value="ACT13044.1"/>
    <property type="molecule type" value="Genomic_DNA"/>
</dbReference>
<dbReference type="SMR" id="C6DGZ5"/>
<dbReference type="STRING" id="561230.PC1_2003"/>
<dbReference type="KEGG" id="pct:PC1_2003"/>
<dbReference type="eggNOG" id="COG0133">
    <property type="taxonomic scope" value="Bacteria"/>
</dbReference>
<dbReference type="HOGENOM" id="CLU_016734_3_1_6"/>
<dbReference type="OrthoDB" id="9766131at2"/>
<dbReference type="UniPathway" id="UPA00035">
    <property type="reaction ID" value="UER00044"/>
</dbReference>
<dbReference type="Proteomes" id="UP000002736">
    <property type="component" value="Chromosome"/>
</dbReference>
<dbReference type="GO" id="GO:0005737">
    <property type="term" value="C:cytoplasm"/>
    <property type="evidence" value="ECO:0007669"/>
    <property type="project" value="TreeGrafter"/>
</dbReference>
<dbReference type="GO" id="GO:0004834">
    <property type="term" value="F:tryptophan synthase activity"/>
    <property type="evidence" value="ECO:0007669"/>
    <property type="project" value="UniProtKB-UniRule"/>
</dbReference>
<dbReference type="CDD" id="cd06446">
    <property type="entry name" value="Trp-synth_B"/>
    <property type="match status" value="1"/>
</dbReference>
<dbReference type="FunFam" id="3.40.50.1100:FF:000001">
    <property type="entry name" value="Tryptophan synthase beta chain"/>
    <property type="match status" value="1"/>
</dbReference>
<dbReference type="FunFam" id="3.40.50.1100:FF:000004">
    <property type="entry name" value="Tryptophan synthase beta chain"/>
    <property type="match status" value="1"/>
</dbReference>
<dbReference type="Gene3D" id="3.40.50.1100">
    <property type="match status" value="2"/>
</dbReference>
<dbReference type="HAMAP" id="MF_00133">
    <property type="entry name" value="Trp_synth_beta"/>
    <property type="match status" value="1"/>
</dbReference>
<dbReference type="InterPro" id="IPR006653">
    <property type="entry name" value="Trp_synth_b_CS"/>
</dbReference>
<dbReference type="InterPro" id="IPR006654">
    <property type="entry name" value="Trp_synth_beta"/>
</dbReference>
<dbReference type="InterPro" id="IPR023026">
    <property type="entry name" value="Trp_synth_beta/beta-like"/>
</dbReference>
<dbReference type="InterPro" id="IPR001926">
    <property type="entry name" value="TrpB-like_PALP"/>
</dbReference>
<dbReference type="InterPro" id="IPR036052">
    <property type="entry name" value="TrpB-like_PALP_sf"/>
</dbReference>
<dbReference type="NCBIfam" id="TIGR00263">
    <property type="entry name" value="trpB"/>
    <property type="match status" value="1"/>
</dbReference>
<dbReference type="PANTHER" id="PTHR48077:SF3">
    <property type="entry name" value="TRYPTOPHAN SYNTHASE"/>
    <property type="match status" value="1"/>
</dbReference>
<dbReference type="PANTHER" id="PTHR48077">
    <property type="entry name" value="TRYPTOPHAN SYNTHASE-RELATED"/>
    <property type="match status" value="1"/>
</dbReference>
<dbReference type="Pfam" id="PF00291">
    <property type="entry name" value="PALP"/>
    <property type="match status" value="1"/>
</dbReference>
<dbReference type="PIRSF" id="PIRSF001413">
    <property type="entry name" value="Trp_syn_beta"/>
    <property type="match status" value="1"/>
</dbReference>
<dbReference type="SUPFAM" id="SSF53686">
    <property type="entry name" value="Tryptophan synthase beta subunit-like PLP-dependent enzymes"/>
    <property type="match status" value="1"/>
</dbReference>
<dbReference type="PROSITE" id="PS00168">
    <property type="entry name" value="TRP_SYNTHASE_BETA"/>
    <property type="match status" value="1"/>
</dbReference>
<organism>
    <name type="scientific">Pectobacterium carotovorum subsp. carotovorum (strain PC1)</name>
    <dbReference type="NCBI Taxonomy" id="561230"/>
    <lineage>
        <taxon>Bacteria</taxon>
        <taxon>Pseudomonadati</taxon>
        <taxon>Pseudomonadota</taxon>
        <taxon>Gammaproteobacteria</taxon>
        <taxon>Enterobacterales</taxon>
        <taxon>Pectobacteriaceae</taxon>
        <taxon>Pectobacterium</taxon>
    </lineage>
</organism>
<protein>
    <recommendedName>
        <fullName evidence="1">Tryptophan synthase beta chain</fullName>
        <ecNumber evidence="1">4.2.1.20</ecNumber>
    </recommendedName>
</protein>
<sequence>MTLLNPYFGEFGGQFVPQILMPALRQLEEAFVNAQKDPEFQAEFTDLLKNYAGRPTALTLCQNLTAGTKTKLYLKREDLLHGGAHKTNQVLGQALLAKRMGKSEIIAETGAGQHGVATALACALLGLKCRVYMGAKDVERQSPNVFRMRLMGAEVIPVHSGSSTLKDACNEALRDWSGSYETAHYLLGTAAGPHPYPTIVREFQRMIGEETKAQILEKEGRLPDAVLACVGGGSNAIGMFADFIDDTSVRLIGIEPGGLGIESGQHGAPLKHGRLGIYFGMKSPMMQTSDGQIEESYSISAGLDFPSVGPQHAYLNSIGRADYVSITDDEALDAFKTLCRSEGIIPALESSHALAHALKMIKAEPEKEQLLVVNLSGRGDKDIFTVHDILKDRGEI</sequence>
<reference key="1">
    <citation type="submission" date="2009-07" db="EMBL/GenBank/DDBJ databases">
        <title>Complete sequence of Pectobacterium carotovorum subsp. carotovorum PC1.</title>
        <authorList>
            <consortium name="US DOE Joint Genome Institute"/>
            <person name="Lucas S."/>
            <person name="Copeland A."/>
            <person name="Lapidus A."/>
            <person name="Glavina del Rio T."/>
            <person name="Tice H."/>
            <person name="Bruce D."/>
            <person name="Goodwin L."/>
            <person name="Pitluck S."/>
            <person name="Munk A.C."/>
            <person name="Brettin T."/>
            <person name="Detter J.C."/>
            <person name="Han C."/>
            <person name="Tapia R."/>
            <person name="Larimer F."/>
            <person name="Land M."/>
            <person name="Hauser L."/>
            <person name="Kyrpides N."/>
            <person name="Mikhailova N."/>
            <person name="Balakrishnan V."/>
            <person name="Glasner J."/>
            <person name="Perna N.T."/>
        </authorList>
    </citation>
    <scope>NUCLEOTIDE SEQUENCE [LARGE SCALE GENOMIC DNA]</scope>
    <source>
        <strain>PC1</strain>
    </source>
</reference>
<proteinExistence type="inferred from homology"/>
<keyword id="KW-0028">Amino-acid biosynthesis</keyword>
<keyword id="KW-0057">Aromatic amino acid biosynthesis</keyword>
<keyword id="KW-0456">Lyase</keyword>
<keyword id="KW-0663">Pyridoxal phosphate</keyword>
<keyword id="KW-0822">Tryptophan biosynthesis</keyword>